<name>SYP_LACE2</name>
<keyword id="KW-0030">Aminoacyl-tRNA synthetase</keyword>
<keyword id="KW-0067">ATP-binding</keyword>
<keyword id="KW-0963">Cytoplasm</keyword>
<keyword id="KW-0436">Ligase</keyword>
<keyword id="KW-0547">Nucleotide-binding</keyword>
<keyword id="KW-0648">Protein biosynthesis</keyword>
<keyword id="KW-1185">Reference proteome</keyword>
<proteinExistence type="inferred from homology"/>
<protein>
    <recommendedName>
        <fullName evidence="1">Proline--tRNA ligase</fullName>
        <ecNumber evidence="1">6.1.1.15</ecNumber>
    </recommendedName>
    <alternativeName>
        <fullName evidence="1">Prolyl-tRNA synthetase</fullName>
        <shortName evidence="1">ProRS</shortName>
    </alternativeName>
</protein>
<sequence length="479" mass="54404">MAEDKKLVEAITSMKEDFAQWYTDVCKKAELMSYSSVKGCMIFKPAGYAIWENIKNEMDRRFKETGVENVYLPMFIPESLLEVEKDHVEGFAPEVAWVTYGGLNPLQERMCVRPTSETLFCDFYKDEIQSYRDLPKVYNQWCSVVRWEKETRPFLRSREFLWQEGHTAHATAEEAEARTQQMLNLYADFCEEVLAIPVIKGRKTDKEKFAGAEATYTIEALMHDGKALQSGTSHNFGDGFAKAFGIQYTDKDNKLKYVHQTSWGTTTRLIGAVIMTHGDDSGLVLPPKVAPVQVDVIPIMQKKAGVLDKAYEVGQALKAAGLRVKVDDSDKNPGWKFSEQEMRGIPVRVEMGPRDIEANQAVIVRRDTREKITVSIDELADRIPEILDTIQKDMLERARAHREAHTYTALNYDEFKDTAANKAGFIKAMWCGDQACEDKIKEDTTCTSRCMPFAQEKLSDVCVCCGKPAKAMVYWGKAY</sequence>
<gene>
    <name evidence="1" type="primary">proS</name>
    <name type="ordered locus">EUBELI_00074</name>
</gene>
<organism>
    <name type="scientific">Lachnospira eligens (strain ATCC 27750 / DSM 3376 / VPI C15-48 / C15-B4)</name>
    <name type="common">Eubacterium eligens</name>
    <dbReference type="NCBI Taxonomy" id="515620"/>
    <lineage>
        <taxon>Bacteria</taxon>
        <taxon>Bacillati</taxon>
        <taxon>Bacillota</taxon>
        <taxon>Clostridia</taxon>
        <taxon>Lachnospirales</taxon>
        <taxon>Lachnospiraceae</taxon>
        <taxon>Lachnospira</taxon>
    </lineage>
</organism>
<reference key="1">
    <citation type="journal article" date="2009" name="Proc. Natl. Acad. Sci. U.S.A.">
        <title>Characterizing a model human gut microbiota composed of members of its two dominant bacterial phyla.</title>
        <authorList>
            <person name="Mahowald M.A."/>
            <person name="Rey F.E."/>
            <person name="Seedorf H."/>
            <person name="Turnbaugh P.J."/>
            <person name="Fulton R.S."/>
            <person name="Wollam A."/>
            <person name="Shah N."/>
            <person name="Wang C."/>
            <person name="Magrini V."/>
            <person name="Wilson R.K."/>
            <person name="Cantarel B.L."/>
            <person name="Coutinho P.M."/>
            <person name="Henrissat B."/>
            <person name="Crock L.W."/>
            <person name="Russell A."/>
            <person name="Verberkmoes N.C."/>
            <person name="Hettich R.L."/>
            <person name="Gordon J.I."/>
        </authorList>
    </citation>
    <scope>NUCLEOTIDE SEQUENCE [LARGE SCALE GENOMIC DNA]</scope>
    <source>
        <strain>ATCC 27750 / DSM 3376 / VPI C15-48 / C15-B4</strain>
    </source>
</reference>
<dbReference type="EC" id="6.1.1.15" evidence="1"/>
<dbReference type="EMBL" id="CP001104">
    <property type="protein sequence ID" value="ACR71111.1"/>
    <property type="molecule type" value="Genomic_DNA"/>
</dbReference>
<dbReference type="RefSeq" id="WP_012738349.1">
    <property type="nucleotide sequence ID" value="NC_012778.1"/>
</dbReference>
<dbReference type="SMR" id="C4Z1D7"/>
<dbReference type="STRING" id="515620.EUBELI_00074"/>
<dbReference type="GeneID" id="41354871"/>
<dbReference type="KEGG" id="eel:EUBELI_00074"/>
<dbReference type="eggNOG" id="COG0441">
    <property type="taxonomic scope" value="Bacteria"/>
</dbReference>
<dbReference type="HOGENOM" id="CLU_001882_4_2_9"/>
<dbReference type="Proteomes" id="UP000001476">
    <property type="component" value="Chromosome"/>
</dbReference>
<dbReference type="GO" id="GO:0017101">
    <property type="term" value="C:aminoacyl-tRNA synthetase multienzyme complex"/>
    <property type="evidence" value="ECO:0007669"/>
    <property type="project" value="TreeGrafter"/>
</dbReference>
<dbReference type="GO" id="GO:0005737">
    <property type="term" value="C:cytoplasm"/>
    <property type="evidence" value="ECO:0007669"/>
    <property type="project" value="UniProtKB-SubCell"/>
</dbReference>
<dbReference type="GO" id="GO:0005524">
    <property type="term" value="F:ATP binding"/>
    <property type="evidence" value="ECO:0007669"/>
    <property type="project" value="UniProtKB-UniRule"/>
</dbReference>
<dbReference type="GO" id="GO:0140096">
    <property type="term" value="F:catalytic activity, acting on a protein"/>
    <property type="evidence" value="ECO:0007669"/>
    <property type="project" value="UniProtKB-ARBA"/>
</dbReference>
<dbReference type="GO" id="GO:0004827">
    <property type="term" value="F:proline-tRNA ligase activity"/>
    <property type="evidence" value="ECO:0007669"/>
    <property type="project" value="UniProtKB-UniRule"/>
</dbReference>
<dbReference type="GO" id="GO:0016740">
    <property type="term" value="F:transferase activity"/>
    <property type="evidence" value="ECO:0007669"/>
    <property type="project" value="UniProtKB-ARBA"/>
</dbReference>
<dbReference type="GO" id="GO:0006433">
    <property type="term" value="P:prolyl-tRNA aminoacylation"/>
    <property type="evidence" value="ECO:0007669"/>
    <property type="project" value="UniProtKB-UniRule"/>
</dbReference>
<dbReference type="CDD" id="cd00862">
    <property type="entry name" value="ProRS_anticodon_zinc"/>
    <property type="match status" value="1"/>
</dbReference>
<dbReference type="CDD" id="cd00778">
    <property type="entry name" value="ProRS_core_arch_euk"/>
    <property type="match status" value="1"/>
</dbReference>
<dbReference type="FunFam" id="3.40.50.800:FF:000005">
    <property type="entry name" value="bifunctional glutamate/proline--tRNA ligase"/>
    <property type="match status" value="1"/>
</dbReference>
<dbReference type="FunFam" id="3.30.110.30:FF:000005">
    <property type="entry name" value="Proline--tRNA ligase"/>
    <property type="match status" value="1"/>
</dbReference>
<dbReference type="FunFam" id="3.30.930.10:FF:000037">
    <property type="entry name" value="Proline--tRNA ligase"/>
    <property type="match status" value="1"/>
</dbReference>
<dbReference type="Gene3D" id="3.40.50.800">
    <property type="entry name" value="Anticodon-binding domain"/>
    <property type="match status" value="1"/>
</dbReference>
<dbReference type="Gene3D" id="3.30.930.10">
    <property type="entry name" value="Bira Bifunctional Protein, Domain 2"/>
    <property type="match status" value="1"/>
</dbReference>
<dbReference type="Gene3D" id="3.30.110.30">
    <property type="entry name" value="C-terminal domain of ProRS"/>
    <property type="match status" value="1"/>
</dbReference>
<dbReference type="HAMAP" id="MF_01571">
    <property type="entry name" value="Pro_tRNA_synth_type3"/>
    <property type="match status" value="1"/>
</dbReference>
<dbReference type="InterPro" id="IPR002314">
    <property type="entry name" value="aa-tRNA-synt_IIb"/>
</dbReference>
<dbReference type="InterPro" id="IPR006195">
    <property type="entry name" value="aa-tRNA-synth_II"/>
</dbReference>
<dbReference type="InterPro" id="IPR045864">
    <property type="entry name" value="aa-tRNA-synth_II/BPL/LPL"/>
</dbReference>
<dbReference type="InterPro" id="IPR004154">
    <property type="entry name" value="Anticodon-bd"/>
</dbReference>
<dbReference type="InterPro" id="IPR036621">
    <property type="entry name" value="Anticodon-bd_dom_sf"/>
</dbReference>
<dbReference type="InterPro" id="IPR002316">
    <property type="entry name" value="Pro-tRNA-ligase_IIa"/>
</dbReference>
<dbReference type="InterPro" id="IPR004499">
    <property type="entry name" value="Pro-tRNA-ligase_IIa_arc-type"/>
</dbReference>
<dbReference type="InterPro" id="IPR016061">
    <property type="entry name" value="Pro-tRNA_ligase_II_C"/>
</dbReference>
<dbReference type="InterPro" id="IPR017449">
    <property type="entry name" value="Pro-tRNA_synth_II"/>
</dbReference>
<dbReference type="InterPro" id="IPR033721">
    <property type="entry name" value="ProRS_core_arch_euk"/>
</dbReference>
<dbReference type="NCBIfam" id="TIGR00408">
    <property type="entry name" value="proS_fam_I"/>
    <property type="match status" value="1"/>
</dbReference>
<dbReference type="PANTHER" id="PTHR43382:SF2">
    <property type="entry name" value="BIFUNCTIONAL GLUTAMATE_PROLINE--TRNA LIGASE"/>
    <property type="match status" value="1"/>
</dbReference>
<dbReference type="PANTHER" id="PTHR43382">
    <property type="entry name" value="PROLYL-TRNA SYNTHETASE"/>
    <property type="match status" value="1"/>
</dbReference>
<dbReference type="Pfam" id="PF03129">
    <property type="entry name" value="HGTP_anticodon"/>
    <property type="match status" value="1"/>
</dbReference>
<dbReference type="Pfam" id="PF09180">
    <property type="entry name" value="ProRS-C_1"/>
    <property type="match status" value="1"/>
</dbReference>
<dbReference type="Pfam" id="PF00587">
    <property type="entry name" value="tRNA-synt_2b"/>
    <property type="match status" value="1"/>
</dbReference>
<dbReference type="PRINTS" id="PR01046">
    <property type="entry name" value="TRNASYNTHPRO"/>
</dbReference>
<dbReference type="SMART" id="SM00946">
    <property type="entry name" value="ProRS-C_1"/>
    <property type="match status" value="1"/>
</dbReference>
<dbReference type="SUPFAM" id="SSF64586">
    <property type="entry name" value="C-terminal domain of ProRS"/>
    <property type="match status" value="1"/>
</dbReference>
<dbReference type="SUPFAM" id="SSF52954">
    <property type="entry name" value="Class II aaRS ABD-related"/>
    <property type="match status" value="1"/>
</dbReference>
<dbReference type="SUPFAM" id="SSF55681">
    <property type="entry name" value="Class II aaRS and biotin synthetases"/>
    <property type="match status" value="1"/>
</dbReference>
<dbReference type="PROSITE" id="PS50862">
    <property type="entry name" value="AA_TRNA_LIGASE_II"/>
    <property type="match status" value="1"/>
</dbReference>
<comment type="function">
    <text evidence="1">Catalyzes the attachment of proline to tRNA(Pro) in a two-step reaction: proline is first activated by ATP to form Pro-AMP and then transferred to the acceptor end of tRNA(Pro).</text>
</comment>
<comment type="catalytic activity">
    <reaction evidence="1">
        <text>tRNA(Pro) + L-proline + ATP = L-prolyl-tRNA(Pro) + AMP + diphosphate</text>
        <dbReference type="Rhea" id="RHEA:14305"/>
        <dbReference type="Rhea" id="RHEA-COMP:9700"/>
        <dbReference type="Rhea" id="RHEA-COMP:9702"/>
        <dbReference type="ChEBI" id="CHEBI:30616"/>
        <dbReference type="ChEBI" id="CHEBI:33019"/>
        <dbReference type="ChEBI" id="CHEBI:60039"/>
        <dbReference type="ChEBI" id="CHEBI:78442"/>
        <dbReference type="ChEBI" id="CHEBI:78532"/>
        <dbReference type="ChEBI" id="CHEBI:456215"/>
        <dbReference type="EC" id="6.1.1.15"/>
    </reaction>
</comment>
<comment type="subunit">
    <text evidence="1">Homodimer.</text>
</comment>
<comment type="subcellular location">
    <subcellularLocation>
        <location evidence="1">Cytoplasm</location>
    </subcellularLocation>
</comment>
<comment type="domain">
    <text evidence="1">Consists of three domains: the N-terminal catalytic domain, the anticodon-binding domain and the C-terminal extension.</text>
</comment>
<comment type="similarity">
    <text evidence="1">Belongs to the class-II aminoacyl-tRNA synthetase family. ProS type 3 subfamily.</text>
</comment>
<feature type="chain" id="PRO_1000215561" description="Proline--tRNA ligase">
    <location>
        <begin position="1"/>
        <end position="479"/>
    </location>
</feature>
<evidence type="ECO:0000255" key="1">
    <source>
        <dbReference type="HAMAP-Rule" id="MF_01571"/>
    </source>
</evidence>
<accession>C4Z1D7</accession>